<organism>
    <name type="scientific">Francisella tularensis subsp. novicida (strain U112)</name>
    <dbReference type="NCBI Taxonomy" id="401614"/>
    <lineage>
        <taxon>Bacteria</taxon>
        <taxon>Pseudomonadati</taxon>
        <taxon>Pseudomonadota</taxon>
        <taxon>Gammaproteobacteria</taxon>
        <taxon>Thiotrichales</taxon>
        <taxon>Francisellaceae</taxon>
        <taxon>Francisella</taxon>
    </lineage>
</organism>
<comment type="function">
    <text evidence="1">Catalyzes the transfer of the diacylglyceryl group from phosphatidylglycerol to the sulfhydryl group of the N-terminal cysteine of a prolipoprotein, the first step in the formation of mature lipoproteins.</text>
</comment>
<comment type="catalytic activity">
    <reaction evidence="1">
        <text>L-cysteinyl-[prolipoprotein] + a 1,2-diacyl-sn-glycero-3-phospho-(1'-sn-glycerol) = an S-1,2-diacyl-sn-glyceryl-L-cysteinyl-[prolipoprotein] + sn-glycerol 1-phosphate + H(+)</text>
        <dbReference type="Rhea" id="RHEA:56712"/>
        <dbReference type="Rhea" id="RHEA-COMP:14679"/>
        <dbReference type="Rhea" id="RHEA-COMP:14680"/>
        <dbReference type="ChEBI" id="CHEBI:15378"/>
        <dbReference type="ChEBI" id="CHEBI:29950"/>
        <dbReference type="ChEBI" id="CHEBI:57685"/>
        <dbReference type="ChEBI" id="CHEBI:64716"/>
        <dbReference type="ChEBI" id="CHEBI:140658"/>
        <dbReference type="EC" id="2.5.1.145"/>
    </reaction>
</comment>
<comment type="pathway">
    <text evidence="1">Protein modification; lipoprotein biosynthesis (diacylglyceryl transfer).</text>
</comment>
<comment type="subcellular location">
    <subcellularLocation>
        <location evidence="1">Cell inner membrane</location>
        <topology evidence="1">Multi-pass membrane protein</topology>
    </subcellularLocation>
</comment>
<comment type="similarity">
    <text evidence="1">Belongs to the Lgt family.</text>
</comment>
<name>LGT_FRATN</name>
<evidence type="ECO:0000255" key="1">
    <source>
        <dbReference type="HAMAP-Rule" id="MF_01147"/>
    </source>
</evidence>
<proteinExistence type="inferred from homology"/>
<gene>
    <name evidence="1" type="primary">lgt</name>
    <name type="ordered locus">FTN_1247</name>
</gene>
<feature type="chain" id="PRO_1000053434" description="Phosphatidylglycerol--prolipoprotein diacylglyceryl transferase">
    <location>
        <begin position="1"/>
        <end position="268"/>
    </location>
</feature>
<feature type="transmembrane region" description="Helical" evidence="1">
    <location>
        <begin position="14"/>
        <end position="34"/>
    </location>
</feature>
<feature type="transmembrane region" description="Helical" evidence="1">
    <location>
        <begin position="57"/>
        <end position="77"/>
    </location>
</feature>
<feature type="transmembrane region" description="Helical" evidence="1">
    <location>
        <begin position="90"/>
        <end position="110"/>
    </location>
</feature>
<feature type="transmembrane region" description="Helical" evidence="1">
    <location>
        <begin position="117"/>
        <end position="137"/>
    </location>
</feature>
<feature type="transmembrane region" description="Helical" evidence="1">
    <location>
        <begin position="174"/>
        <end position="194"/>
    </location>
</feature>
<feature type="transmembrane region" description="Helical" evidence="1">
    <location>
        <begin position="200"/>
        <end position="220"/>
    </location>
</feature>
<feature type="transmembrane region" description="Helical" evidence="1">
    <location>
        <begin position="238"/>
        <end position="258"/>
    </location>
</feature>
<feature type="binding site" evidence="1">
    <location>
        <position position="140"/>
    </location>
    <ligand>
        <name>a 1,2-diacyl-sn-glycero-3-phospho-(1'-sn-glycerol)</name>
        <dbReference type="ChEBI" id="CHEBI:64716"/>
    </ligand>
</feature>
<keyword id="KW-0997">Cell inner membrane</keyword>
<keyword id="KW-1003">Cell membrane</keyword>
<keyword id="KW-0472">Membrane</keyword>
<keyword id="KW-0808">Transferase</keyword>
<keyword id="KW-0812">Transmembrane</keyword>
<keyword id="KW-1133">Transmembrane helix</keyword>
<accession>A0Q7B3</accession>
<dbReference type="EC" id="2.5.1.145" evidence="1"/>
<dbReference type="EMBL" id="CP000439">
    <property type="protein sequence ID" value="ABK90128.1"/>
    <property type="molecule type" value="Genomic_DNA"/>
</dbReference>
<dbReference type="RefSeq" id="WP_003025780.1">
    <property type="nucleotide sequence ID" value="NZ_CP009633.1"/>
</dbReference>
<dbReference type="SMR" id="A0Q7B3"/>
<dbReference type="GeneID" id="75265021"/>
<dbReference type="KEGG" id="ftn:FTN_1247"/>
<dbReference type="KEGG" id="ftx:AW25_759"/>
<dbReference type="BioCyc" id="FTUL401614:G1G75-1292-MONOMER"/>
<dbReference type="UniPathway" id="UPA00664"/>
<dbReference type="Proteomes" id="UP000000762">
    <property type="component" value="Chromosome"/>
</dbReference>
<dbReference type="GO" id="GO:0005886">
    <property type="term" value="C:plasma membrane"/>
    <property type="evidence" value="ECO:0007669"/>
    <property type="project" value="UniProtKB-SubCell"/>
</dbReference>
<dbReference type="GO" id="GO:0008961">
    <property type="term" value="F:phosphatidylglycerol-prolipoprotein diacylglyceryl transferase activity"/>
    <property type="evidence" value="ECO:0007669"/>
    <property type="project" value="UniProtKB-UniRule"/>
</dbReference>
<dbReference type="GO" id="GO:0042158">
    <property type="term" value="P:lipoprotein biosynthetic process"/>
    <property type="evidence" value="ECO:0007669"/>
    <property type="project" value="UniProtKB-UniRule"/>
</dbReference>
<dbReference type="HAMAP" id="MF_01147">
    <property type="entry name" value="Lgt"/>
    <property type="match status" value="1"/>
</dbReference>
<dbReference type="InterPro" id="IPR001640">
    <property type="entry name" value="Lgt"/>
</dbReference>
<dbReference type="NCBIfam" id="TIGR00544">
    <property type="entry name" value="lgt"/>
    <property type="match status" value="1"/>
</dbReference>
<dbReference type="PANTHER" id="PTHR30589:SF0">
    <property type="entry name" value="PHOSPHATIDYLGLYCEROL--PROLIPOPROTEIN DIACYLGLYCERYL TRANSFERASE"/>
    <property type="match status" value="1"/>
</dbReference>
<dbReference type="PANTHER" id="PTHR30589">
    <property type="entry name" value="PROLIPOPROTEIN DIACYLGLYCERYL TRANSFERASE"/>
    <property type="match status" value="1"/>
</dbReference>
<dbReference type="Pfam" id="PF01790">
    <property type="entry name" value="LGT"/>
    <property type="match status" value="1"/>
</dbReference>
<dbReference type="PROSITE" id="PS01311">
    <property type="entry name" value="LGT"/>
    <property type="match status" value="1"/>
</dbReference>
<protein>
    <recommendedName>
        <fullName evidence="1">Phosphatidylglycerol--prolipoprotein diacylglyceryl transferase</fullName>
        <ecNumber evidence="1">2.5.1.145</ecNumber>
    </recommendedName>
</protein>
<sequence length="268" mass="30562">MLQYPHINPVALQLGPIKIHWYGLMYLLGIFAGWYLTRYRAKVKPWAPIKPEQVGDLTFYVALGVILGGRIGYIIFYNLPYYFHNPSQMFFLWDGGMSFHGGFIGVLIAFALFARKIGANFFDLGEFVAPVIPIGLGAGRIGNFINGELWGKVTDSPLGMVFPTGGPLPRYPSQLFEFFFEGVVLFSVLWLVTIKKRPRYLVLGLFMFLYGCARFICEFFRQPDPQYGYIFFNWMTMGQILSIPMILLGAVILIAVFIKTRKNKCENI</sequence>
<reference key="1">
    <citation type="journal article" date="2007" name="Genome Biol.">
        <title>Comparison of Francisella tularensis genomes reveals evolutionary events associated with the emergence of human pathogenic strains.</title>
        <authorList>
            <person name="Rohmer L."/>
            <person name="Fong C."/>
            <person name="Abmayr S."/>
            <person name="Wasnick M."/>
            <person name="Larson Freeman T.J."/>
            <person name="Radey M."/>
            <person name="Guina T."/>
            <person name="Svensson K."/>
            <person name="Hayden H.S."/>
            <person name="Jacobs M."/>
            <person name="Gallagher L.A."/>
            <person name="Manoil C."/>
            <person name="Ernst R.K."/>
            <person name="Drees B."/>
            <person name="Buckley D."/>
            <person name="Haugen E."/>
            <person name="Bovee D."/>
            <person name="Zhou Y."/>
            <person name="Chang J."/>
            <person name="Levy R."/>
            <person name="Lim R."/>
            <person name="Gillett W."/>
            <person name="Guenthener D."/>
            <person name="Kang A."/>
            <person name="Shaffer S.A."/>
            <person name="Taylor G."/>
            <person name="Chen J."/>
            <person name="Gallis B."/>
            <person name="D'Argenio D.A."/>
            <person name="Forsman M."/>
            <person name="Olson M.V."/>
            <person name="Goodlett D.R."/>
            <person name="Kaul R."/>
            <person name="Miller S.I."/>
            <person name="Brittnacher M.J."/>
        </authorList>
    </citation>
    <scope>NUCLEOTIDE SEQUENCE [LARGE SCALE GENOMIC DNA]</scope>
    <source>
        <strain>U112</strain>
    </source>
</reference>